<gene>
    <name evidence="1" type="primary">ureB</name>
    <name type="ordered locus">USA300HOU_2270</name>
</gene>
<keyword id="KW-0963">Cytoplasm</keyword>
<keyword id="KW-0378">Hydrolase</keyword>
<reference key="1">
    <citation type="journal article" date="2007" name="BMC Microbiol.">
        <title>Subtle genetic changes enhance virulence of methicillin resistant and sensitive Staphylococcus aureus.</title>
        <authorList>
            <person name="Highlander S.K."/>
            <person name="Hulten K.G."/>
            <person name="Qin X."/>
            <person name="Jiang H."/>
            <person name="Yerrapragada S."/>
            <person name="Mason E.O. Jr."/>
            <person name="Shang Y."/>
            <person name="Williams T.M."/>
            <person name="Fortunov R.M."/>
            <person name="Liu Y."/>
            <person name="Igboeli O."/>
            <person name="Petrosino J."/>
            <person name="Tirumalai M."/>
            <person name="Uzman A."/>
            <person name="Fox G.E."/>
            <person name="Cardenas A.M."/>
            <person name="Muzny D.M."/>
            <person name="Hemphill L."/>
            <person name="Ding Y."/>
            <person name="Dugan S."/>
            <person name="Blyth P.R."/>
            <person name="Buhay C.J."/>
            <person name="Dinh H.H."/>
            <person name="Hawes A.C."/>
            <person name="Holder M."/>
            <person name="Kovar C.L."/>
            <person name="Lee S.L."/>
            <person name="Liu W."/>
            <person name="Nazareth L.V."/>
            <person name="Wang Q."/>
            <person name="Zhou J."/>
            <person name="Kaplan S.L."/>
            <person name="Weinstock G.M."/>
        </authorList>
    </citation>
    <scope>NUCLEOTIDE SEQUENCE [LARGE SCALE GENOMIC DNA]</scope>
    <source>
        <strain>USA300 / TCH1516</strain>
    </source>
</reference>
<protein>
    <recommendedName>
        <fullName evidence="1">Urease subunit beta</fullName>
        <ecNumber evidence="1">3.5.1.5</ecNumber>
    </recommendedName>
    <alternativeName>
        <fullName evidence="1">Urea amidohydrolase subunit beta</fullName>
    </alternativeName>
</protein>
<accession>A8Z386</accession>
<feature type="chain" id="PRO_1000088512" description="Urease subunit beta">
    <location>
        <begin position="1"/>
        <end position="136"/>
    </location>
</feature>
<feature type="region of interest" description="Disordered" evidence="2">
    <location>
        <begin position="113"/>
        <end position="136"/>
    </location>
</feature>
<proteinExistence type="inferred from homology"/>
<comment type="catalytic activity">
    <reaction evidence="1">
        <text>urea + 2 H2O + H(+) = hydrogencarbonate + 2 NH4(+)</text>
        <dbReference type="Rhea" id="RHEA:20557"/>
        <dbReference type="ChEBI" id="CHEBI:15377"/>
        <dbReference type="ChEBI" id="CHEBI:15378"/>
        <dbReference type="ChEBI" id="CHEBI:16199"/>
        <dbReference type="ChEBI" id="CHEBI:17544"/>
        <dbReference type="ChEBI" id="CHEBI:28938"/>
        <dbReference type="EC" id="3.5.1.5"/>
    </reaction>
</comment>
<comment type="pathway">
    <text evidence="1">Nitrogen metabolism; urea degradation; CO(2) and NH(3) from urea (urease route): step 1/1.</text>
</comment>
<comment type="subunit">
    <text evidence="1">Heterotrimer of UreA (gamma), UreB (beta) and UreC (alpha) subunits. Three heterotrimers associate to form the active enzyme.</text>
</comment>
<comment type="subcellular location">
    <subcellularLocation>
        <location evidence="1">Cytoplasm</location>
    </subcellularLocation>
</comment>
<comment type="similarity">
    <text evidence="1">Belongs to the urease beta subunit family.</text>
</comment>
<name>URE2_STAAT</name>
<organism>
    <name type="scientific">Staphylococcus aureus (strain USA300 / TCH1516)</name>
    <dbReference type="NCBI Taxonomy" id="451516"/>
    <lineage>
        <taxon>Bacteria</taxon>
        <taxon>Bacillati</taxon>
        <taxon>Bacillota</taxon>
        <taxon>Bacilli</taxon>
        <taxon>Bacillales</taxon>
        <taxon>Staphylococcaceae</taxon>
        <taxon>Staphylococcus</taxon>
    </lineage>
</organism>
<dbReference type="EC" id="3.5.1.5" evidence="1"/>
<dbReference type="EMBL" id="CP000730">
    <property type="protein sequence ID" value="ABX30263.1"/>
    <property type="molecule type" value="Genomic_DNA"/>
</dbReference>
<dbReference type="RefSeq" id="WP_000612128.1">
    <property type="nucleotide sequence ID" value="NC_010079.1"/>
</dbReference>
<dbReference type="SMR" id="A8Z386"/>
<dbReference type="KEGG" id="sax:USA300HOU_2270"/>
<dbReference type="HOGENOM" id="CLU_129707_2_2_9"/>
<dbReference type="UniPathway" id="UPA00258">
    <property type="reaction ID" value="UER00370"/>
</dbReference>
<dbReference type="GO" id="GO:0035550">
    <property type="term" value="C:urease complex"/>
    <property type="evidence" value="ECO:0007669"/>
    <property type="project" value="InterPro"/>
</dbReference>
<dbReference type="GO" id="GO:0009039">
    <property type="term" value="F:urease activity"/>
    <property type="evidence" value="ECO:0007669"/>
    <property type="project" value="UniProtKB-UniRule"/>
</dbReference>
<dbReference type="GO" id="GO:0043419">
    <property type="term" value="P:urea catabolic process"/>
    <property type="evidence" value="ECO:0007669"/>
    <property type="project" value="UniProtKB-UniRule"/>
</dbReference>
<dbReference type="CDD" id="cd00407">
    <property type="entry name" value="Urease_beta"/>
    <property type="match status" value="1"/>
</dbReference>
<dbReference type="FunFam" id="2.10.150.10:FF:000001">
    <property type="entry name" value="Urease subunit beta"/>
    <property type="match status" value="1"/>
</dbReference>
<dbReference type="Gene3D" id="2.10.150.10">
    <property type="entry name" value="Urease, beta subunit"/>
    <property type="match status" value="1"/>
</dbReference>
<dbReference type="HAMAP" id="MF_01954">
    <property type="entry name" value="Urease_beta"/>
    <property type="match status" value="1"/>
</dbReference>
<dbReference type="InterPro" id="IPR002019">
    <property type="entry name" value="Urease_beta-like"/>
</dbReference>
<dbReference type="InterPro" id="IPR036461">
    <property type="entry name" value="Urease_betasu_sf"/>
</dbReference>
<dbReference type="InterPro" id="IPR050069">
    <property type="entry name" value="Urease_subunit"/>
</dbReference>
<dbReference type="NCBIfam" id="NF009682">
    <property type="entry name" value="PRK13203.1"/>
    <property type="match status" value="1"/>
</dbReference>
<dbReference type="NCBIfam" id="TIGR00192">
    <property type="entry name" value="urease_beta"/>
    <property type="match status" value="1"/>
</dbReference>
<dbReference type="PANTHER" id="PTHR33569">
    <property type="entry name" value="UREASE"/>
    <property type="match status" value="1"/>
</dbReference>
<dbReference type="PANTHER" id="PTHR33569:SF1">
    <property type="entry name" value="UREASE"/>
    <property type="match status" value="1"/>
</dbReference>
<dbReference type="Pfam" id="PF00699">
    <property type="entry name" value="Urease_beta"/>
    <property type="match status" value="1"/>
</dbReference>
<dbReference type="SUPFAM" id="SSF51278">
    <property type="entry name" value="Urease, beta-subunit"/>
    <property type="match status" value="1"/>
</dbReference>
<evidence type="ECO:0000255" key="1">
    <source>
        <dbReference type="HAMAP-Rule" id="MF_01954"/>
    </source>
</evidence>
<evidence type="ECO:0000256" key="2">
    <source>
        <dbReference type="SAM" id="MobiDB-lite"/>
    </source>
</evidence>
<sequence length="136" mass="15165">MIPGEIITKSTEVEINNHHPETVIEVENTGDRPIQVGSHFHFYEANAALDFEREMAYGKHLDIPAGAAVRFEPGDKKEVQLVEYAGKRKIFGFRGMVNGPIDESRVYRPTDENDEYAGVFGDNGAENVNKKGGKRS</sequence>